<accession>Q6F9D2</accession>
<feature type="chain" id="PRO_0000227276" description="UvrABC system protein B">
    <location>
        <begin position="1"/>
        <end position="675"/>
    </location>
</feature>
<feature type="domain" description="Helicase ATP-binding" evidence="1">
    <location>
        <begin position="30"/>
        <end position="417"/>
    </location>
</feature>
<feature type="domain" description="Helicase C-terminal" evidence="1">
    <location>
        <begin position="434"/>
        <end position="601"/>
    </location>
</feature>
<feature type="domain" description="UVR" evidence="1">
    <location>
        <begin position="637"/>
        <end position="672"/>
    </location>
</feature>
<feature type="short sequence motif" description="Beta-hairpin">
    <location>
        <begin position="96"/>
        <end position="119"/>
    </location>
</feature>
<feature type="binding site" evidence="1">
    <location>
        <begin position="43"/>
        <end position="50"/>
    </location>
    <ligand>
        <name>ATP</name>
        <dbReference type="ChEBI" id="CHEBI:30616"/>
    </ligand>
</feature>
<comment type="function">
    <text evidence="1">The UvrABC repair system catalyzes the recognition and processing of DNA lesions. A damage recognition complex composed of 2 UvrA and 2 UvrB subunits scans DNA for abnormalities. Upon binding of the UvrA(2)B(2) complex to a putative damaged site, the DNA wraps around one UvrB monomer. DNA wrap is dependent on ATP binding by UvrB and probably causes local melting of the DNA helix, facilitating insertion of UvrB beta-hairpin between the DNA strands. Then UvrB probes one DNA strand for the presence of a lesion. If a lesion is found the UvrA subunits dissociate and the UvrB-DNA preincision complex is formed. This complex is subsequently bound by UvrC and the second UvrB is released. If no lesion is found, the DNA wraps around the other UvrB subunit that will check the other stand for damage.</text>
</comment>
<comment type="subunit">
    <text evidence="1">Forms a heterotetramer with UvrA during the search for lesions. Interacts with UvrC in an incision complex.</text>
</comment>
<comment type="subcellular location">
    <subcellularLocation>
        <location evidence="1">Cytoplasm</location>
    </subcellularLocation>
</comment>
<comment type="domain">
    <text evidence="1">The beta-hairpin motif is involved in DNA binding.</text>
</comment>
<comment type="similarity">
    <text evidence="1">Belongs to the UvrB family.</text>
</comment>
<organism>
    <name type="scientific">Acinetobacter baylyi (strain ATCC 33305 / BD413 / ADP1)</name>
    <dbReference type="NCBI Taxonomy" id="62977"/>
    <lineage>
        <taxon>Bacteria</taxon>
        <taxon>Pseudomonadati</taxon>
        <taxon>Pseudomonadota</taxon>
        <taxon>Gammaproteobacteria</taxon>
        <taxon>Moraxellales</taxon>
        <taxon>Moraxellaceae</taxon>
        <taxon>Acinetobacter</taxon>
    </lineage>
</organism>
<dbReference type="EMBL" id="CR543861">
    <property type="protein sequence ID" value="CAG69332.1"/>
    <property type="molecule type" value="Genomic_DNA"/>
</dbReference>
<dbReference type="SMR" id="Q6F9D2"/>
<dbReference type="STRING" id="202950.GCA_001485005_01450"/>
<dbReference type="KEGG" id="aci:ACIAD2569"/>
<dbReference type="eggNOG" id="COG0556">
    <property type="taxonomic scope" value="Bacteria"/>
</dbReference>
<dbReference type="HOGENOM" id="CLU_009621_2_1_6"/>
<dbReference type="Proteomes" id="UP000000430">
    <property type="component" value="Chromosome"/>
</dbReference>
<dbReference type="GO" id="GO:0005737">
    <property type="term" value="C:cytoplasm"/>
    <property type="evidence" value="ECO:0007669"/>
    <property type="project" value="UniProtKB-SubCell"/>
</dbReference>
<dbReference type="GO" id="GO:0009380">
    <property type="term" value="C:excinuclease repair complex"/>
    <property type="evidence" value="ECO:0007669"/>
    <property type="project" value="InterPro"/>
</dbReference>
<dbReference type="GO" id="GO:0005524">
    <property type="term" value="F:ATP binding"/>
    <property type="evidence" value="ECO:0007669"/>
    <property type="project" value="UniProtKB-UniRule"/>
</dbReference>
<dbReference type="GO" id="GO:0016887">
    <property type="term" value="F:ATP hydrolysis activity"/>
    <property type="evidence" value="ECO:0007669"/>
    <property type="project" value="InterPro"/>
</dbReference>
<dbReference type="GO" id="GO:0003677">
    <property type="term" value="F:DNA binding"/>
    <property type="evidence" value="ECO:0007669"/>
    <property type="project" value="UniProtKB-UniRule"/>
</dbReference>
<dbReference type="GO" id="GO:0009381">
    <property type="term" value="F:excinuclease ABC activity"/>
    <property type="evidence" value="ECO:0007669"/>
    <property type="project" value="UniProtKB-UniRule"/>
</dbReference>
<dbReference type="GO" id="GO:0006289">
    <property type="term" value="P:nucleotide-excision repair"/>
    <property type="evidence" value="ECO:0007669"/>
    <property type="project" value="UniProtKB-UniRule"/>
</dbReference>
<dbReference type="GO" id="GO:0009432">
    <property type="term" value="P:SOS response"/>
    <property type="evidence" value="ECO:0007669"/>
    <property type="project" value="UniProtKB-UniRule"/>
</dbReference>
<dbReference type="CDD" id="cd17916">
    <property type="entry name" value="DEXHc_UvrB"/>
    <property type="match status" value="1"/>
</dbReference>
<dbReference type="CDD" id="cd18790">
    <property type="entry name" value="SF2_C_UvrB"/>
    <property type="match status" value="1"/>
</dbReference>
<dbReference type="FunFam" id="3.40.50.300:FF:000477">
    <property type="entry name" value="UvrABC system protein B"/>
    <property type="match status" value="1"/>
</dbReference>
<dbReference type="Gene3D" id="6.10.140.240">
    <property type="match status" value="1"/>
</dbReference>
<dbReference type="Gene3D" id="3.40.50.300">
    <property type="entry name" value="P-loop containing nucleotide triphosphate hydrolases"/>
    <property type="match status" value="3"/>
</dbReference>
<dbReference type="Gene3D" id="4.10.860.10">
    <property type="entry name" value="UVR domain"/>
    <property type="match status" value="1"/>
</dbReference>
<dbReference type="HAMAP" id="MF_00204">
    <property type="entry name" value="UvrB"/>
    <property type="match status" value="1"/>
</dbReference>
<dbReference type="InterPro" id="IPR006935">
    <property type="entry name" value="Helicase/UvrB_N"/>
</dbReference>
<dbReference type="InterPro" id="IPR014001">
    <property type="entry name" value="Helicase_ATP-bd"/>
</dbReference>
<dbReference type="InterPro" id="IPR001650">
    <property type="entry name" value="Helicase_C-like"/>
</dbReference>
<dbReference type="InterPro" id="IPR027417">
    <property type="entry name" value="P-loop_NTPase"/>
</dbReference>
<dbReference type="InterPro" id="IPR001943">
    <property type="entry name" value="UVR_dom"/>
</dbReference>
<dbReference type="InterPro" id="IPR036876">
    <property type="entry name" value="UVR_dom_sf"/>
</dbReference>
<dbReference type="InterPro" id="IPR004807">
    <property type="entry name" value="UvrB"/>
</dbReference>
<dbReference type="InterPro" id="IPR041471">
    <property type="entry name" value="UvrB_inter"/>
</dbReference>
<dbReference type="InterPro" id="IPR024759">
    <property type="entry name" value="UvrB_YAD/RRR_dom"/>
</dbReference>
<dbReference type="NCBIfam" id="NF003673">
    <property type="entry name" value="PRK05298.1"/>
    <property type="match status" value="1"/>
</dbReference>
<dbReference type="NCBIfam" id="TIGR00631">
    <property type="entry name" value="uvrb"/>
    <property type="match status" value="1"/>
</dbReference>
<dbReference type="PANTHER" id="PTHR24029">
    <property type="entry name" value="UVRABC SYSTEM PROTEIN B"/>
    <property type="match status" value="1"/>
</dbReference>
<dbReference type="PANTHER" id="PTHR24029:SF0">
    <property type="entry name" value="UVRABC SYSTEM PROTEIN B"/>
    <property type="match status" value="1"/>
</dbReference>
<dbReference type="Pfam" id="PF00271">
    <property type="entry name" value="Helicase_C"/>
    <property type="match status" value="1"/>
</dbReference>
<dbReference type="Pfam" id="PF04851">
    <property type="entry name" value="ResIII"/>
    <property type="match status" value="1"/>
</dbReference>
<dbReference type="Pfam" id="PF02151">
    <property type="entry name" value="UVR"/>
    <property type="match status" value="1"/>
</dbReference>
<dbReference type="Pfam" id="PF12344">
    <property type="entry name" value="UvrB"/>
    <property type="match status" value="1"/>
</dbReference>
<dbReference type="Pfam" id="PF17757">
    <property type="entry name" value="UvrB_inter"/>
    <property type="match status" value="1"/>
</dbReference>
<dbReference type="SMART" id="SM00487">
    <property type="entry name" value="DEXDc"/>
    <property type="match status" value="1"/>
</dbReference>
<dbReference type="SMART" id="SM00490">
    <property type="entry name" value="HELICc"/>
    <property type="match status" value="1"/>
</dbReference>
<dbReference type="SUPFAM" id="SSF46600">
    <property type="entry name" value="C-terminal UvrC-binding domain of UvrB"/>
    <property type="match status" value="1"/>
</dbReference>
<dbReference type="SUPFAM" id="SSF52540">
    <property type="entry name" value="P-loop containing nucleoside triphosphate hydrolases"/>
    <property type="match status" value="2"/>
</dbReference>
<dbReference type="PROSITE" id="PS51192">
    <property type="entry name" value="HELICASE_ATP_BIND_1"/>
    <property type="match status" value="1"/>
</dbReference>
<dbReference type="PROSITE" id="PS51194">
    <property type="entry name" value="HELICASE_CTER"/>
    <property type="match status" value="1"/>
</dbReference>
<dbReference type="PROSITE" id="PS50151">
    <property type="entry name" value="UVR"/>
    <property type="match status" value="1"/>
</dbReference>
<proteinExistence type="inferred from homology"/>
<evidence type="ECO:0000255" key="1">
    <source>
        <dbReference type="HAMAP-Rule" id="MF_00204"/>
    </source>
</evidence>
<keyword id="KW-0067">ATP-binding</keyword>
<keyword id="KW-0963">Cytoplasm</keyword>
<keyword id="KW-0227">DNA damage</keyword>
<keyword id="KW-0228">DNA excision</keyword>
<keyword id="KW-0234">DNA repair</keyword>
<keyword id="KW-0267">Excision nuclease</keyword>
<keyword id="KW-0547">Nucleotide-binding</keyword>
<keyword id="KW-0742">SOS response</keyword>
<gene>
    <name evidence="1" type="primary">uvrB</name>
    <name type="ordered locus">ACIAD2569</name>
</gene>
<reference key="1">
    <citation type="journal article" date="2004" name="Nucleic Acids Res.">
        <title>Unique features revealed by the genome sequence of Acinetobacter sp. ADP1, a versatile and naturally transformation competent bacterium.</title>
        <authorList>
            <person name="Barbe V."/>
            <person name="Vallenet D."/>
            <person name="Fonknechten N."/>
            <person name="Kreimeyer A."/>
            <person name="Oztas S."/>
            <person name="Labarre L."/>
            <person name="Cruveiller S."/>
            <person name="Robert C."/>
            <person name="Duprat S."/>
            <person name="Wincker P."/>
            <person name="Ornston L.N."/>
            <person name="Weissenbach J."/>
            <person name="Marliere P."/>
            <person name="Cohen G.N."/>
            <person name="Medigue C."/>
        </authorList>
    </citation>
    <scope>NUCLEOTIDE SEQUENCE [LARGE SCALE GENOMIC DNA]</scope>
    <source>
        <strain>ATCC 33305 / BD413 / ADP1</strain>
    </source>
</reference>
<name>UVRB_ACIAD</name>
<protein>
    <recommendedName>
        <fullName evidence="1">UvrABC system protein B</fullName>
        <shortName evidence="1">Protein UvrB</shortName>
    </recommendedName>
    <alternativeName>
        <fullName evidence="1">Excinuclease ABC subunit B</fullName>
    </alternativeName>
</protein>
<sequence length="675" mass="77685">MRVNDNQPFDLVTNYQPAGDQPQAIKKLVSGIEQGNRNQLLLGVTGSGKTYTMANVIAQTQRPTIVMAHNKTLAAQLYGEFKAFFPNNAVEYFVSYYDYYQPEAYVPSSDTFIEKDAAINDHIDQMRLSATRALLERRDAIIVASVSAIYGLGDPEAYMKMLLHVVEGDRINRDDLIRRLVEMQYTRNELEFLRGTYRIRGEILDVFPAESDQFAIRIELFDDEVDSIRWFDPLTGKMQRKVPRVTIYPKSHYVTPKDNLSRAIETIKDELQDQLKFFREHDKLLEAQRIEQRTRYDLEMMQQLGYTNGIENYSRHLSGRSPGAAPPTLFDYIPEDALLIIDESHVTVPQIGAMYKGDRSRKENLVNYGFRLPSALDNRPMKFEEWERIVPTTVFVSATPAKYELEKSDQIVEQVVRPTGLIDPEIEIRPVLTQVDDVLSEINIRKEMDERVLITTLTKRMAEDLTSYLKEYGVKVAYLHSDIDTVERVKIIHELRTGVYDVLVGINLLREGLDMPEVSLVAILDADKEGFLRSERSLIQTIGRAARNIKGKAILYADRMTDSMQKAIDETERRREKQIEFNKIHGITPRSAVRQKVKEIDTGEVFNDDDIEGKISEQARALSADERHILADPKLFAKHMSKLEKEMLKASKELQFEQAARLRDEILRLKAQMLH</sequence>